<sequence>MAKRDFYEVLGVTKTCTEAEMKVAFRKAAMQWHPDRNPGNEEAEIQFKEINEAYQTLSDGQKRAAYDRYGHAAFEHGGGGNDGFASSMADIFDDLFGDVMGRRGGRNGPARGSDLRYNMEITLEEAFQGKLASLTLPTSITCEACDGTGAKAGAKPRICPTCGGQGRVRAQQGFFAIERTCPQCHGRGEIIDDPCQACGGAGRVTRERTLSVNIPPGVEDGTRIRLAGEGEAGTRGGPAGDLYIFVSTKPHPFFQRDGADLFCRVPISMTQAALGGEVTVHTIDGKEAKVKISEGTQSGKQFKLKNKGMPVLRSREVGDLYIQATVETPQNLTKRQRELLAEFDAESSNKTHPEASGFFARMKDFFENLSGQ</sequence>
<proteinExistence type="inferred from homology"/>
<gene>
    <name evidence="1" type="primary">dnaJ</name>
    <name type="ordered locus">Bind_0129</name>
</gene>
<protein>
    <recommendedName>
        <fullName evidence="1">Chaperone protein DnaJ</fullName>
    </recommendedName>
</protein>
<organism>
    <name type="scientific">Beijerinckia indica subsp. indica (strain ATCC 9039 / DSM 1715 / NCIMB 8712)</name>
    <dbReference type="NCBI Taxonomy" id="395963"/>
    <lineage>
        <taxon>Bacteria</taxon>
        <taxon>Pseudomonadati</taxon>
        <taxon>Pseudomonadota</taxon>
        <taxon>Alphaproteobacteria</taxon>
        <taxon>Hyphomicrobiales</taxon>
        <taxon>Beijerinckiaceae</taxon>
        <taxon>Beijerinckia</taxon>
    </lineage>
</organism>
<comment type="function">
    <text evidence="1">Participates actively in the response to hyperosmotic and heat shock by preventing the aggregation of stress-denatured proteins and by disaggregating proteins, also in an autonomous, DnaK-independent fashion. Unfolded proteins bind initially to DnaJ; upon interaction with the DnaJ-bound protein, DnaK hydrolyzes its bound ATP, resulting in the formation of a stable complex. GrpE releases ADP from DnaK; ATP binding to DnaK triggers the release of the substrate protein, thus completing the reaction cycle. Several rounds of ATP-dependent interactions between DnaJ, DnaK and GrpE are required for fully efficient folding. Also involved, together with DnaK and GrpE, in the DNA replication of plasmids through activation of initiation proteins.</text>
</comment>
<comment type="cofactor">
    <cofactor evidence="1">
        <name>Zn(2+)</name>
        <dbReference type="ChEBI" id="CHEBI:29105"/>
    </cofactor>
    <text evidence="1">Binds 2 Zn(2+) ions per monomer.</text>
</comment>
<comment type="subunit">
    <text evidence="1">Homodimer.</text>
</comment>
<comment type="subcellular location">
    <subcellularLocation>
        <location evidence="1">Cytoplasm</location>
    </subcellularLocation>
</comment>
<comment type="domain">
    <text evidence="1">The J domain is necessary and sufficient to stimulate DnaK ATPase activity. Zinc center 1 plays an important role in the autonomous, DnaK-independent chaperone activity of DnaJ. Zinc center 2 is essential for interaction with DnaK and for DnaJ activity.</text>
</comment>
<comment type="similarity">
    <text evidence="1">Belongs to the DnaJ family.</text>
</comment>
<dbReference type="EMBL" id="CP001016">
    <property type="protein sequence ID" value="ACB93787.1"/>
    <property type="molecule type" value="Genomic_DNA"/>
</dbReference>
<dbReference type="RefSeq" id="WP_012383145.1">
    <property type="nucleotide sequence ID" value="NC_010581.1"/>
</dbReference>
<dbReference type="SMR" id="B2IBR5"/>
<dbReference type="STRING" id="395963.Bind_0129"/>
<dbReference type="KEGG" id="bid:Bind_0129"/>
<dbReference type="eggNOG" id="COG0484">
    <property type="taxonomic scope" value="Bacteria"/>
</dbReference>
<dbReference type="HOGENOM" id="CLU_017633_0_7_5"/>
<dbReference type="OrthoDB" id="9779889at2"/>
<dbReference type="Proteomes" id="UP000001695">
    <property type="component" value="Chromosome"/>
</dbReference>
<dbReference type="GO" id="GO:0005737">
    <property type="term" value="C:cytoplasm"/>
    <property type="evidence" value="ECO:0007669"/>
    <property type="project" value="UniProtKB-SubCell"/>
</dbReference>
<dbReference type="GO" id="GO:0005524">
    <property type="term" value="F:ATP binding"/>
    <property type="evidence" value="ECO:0007669"/>
    <property type="project" value="InterPro"/>
</dbReference>
<dbReference type="GO" id="GO:0031072">
    <property type="term" value="F:heat shock protein binding"/>
    <property type="evidence" value="ECO:0007669"/>
    <property type="project" value="InterPro"/>
</dbReference>
<dbReference type="GO" id="GO:0051082">
    <property type="term" value="F:unfolded protein binding"/>
    <property type="evidence" value="ECO:0007669"/>
    <property type="project" value="UniProtKB-UniRule"/>
</dbReference>
<dbReference type="GO" id="GO:0008270">
    <property type="term" value="F:zinc ion binding"/>
    <property type="evidence" value="ECO:0007669"/>
    <property type="project" value="UniProtKB-UniRule"/>
</dbReference>
<dbReference type="GO" id="GO:0051085">
    <property type="term" value="P:chaperone cofactor-dependent protein refolding"/>
    <property type="evidence" value="ECO:0007669"/>
    <property type="project" value="TreeGrafter"/>
</dbReference>
<dbReference type="GO" id="GO:0006260">
    <property type="term" value="P:DNA replication"/>
    <property type="evidence" value="ECO:0007669"/>
    <property type="project" value="UniProtKB-KW"/>
</dbReference>
<dbReference type="GO" id="GO:0042026">
    <property type="term" value="P:protein refolding"/>
    <property type="evidence" value="ECO:0007669"/>
    <property type="project" value="TreeGrafter"/>
</dbReference>
<dbReference type="GO" id="GO:0009408">
    <property type="term" value="P:response to heat"/>
    <property type="evidence" value="ECO:0007669"/>
    <property type="project" value="InterPro"/>
</dbReference>
<dbReference type="CDD" id="cd06257">
    <property type="entry name" value="DnaJ"/>
    <property type="match status" value="1"/>
</dbReference>
<dbReference type="CDD" id="cd10747">
    <property type="entry name" value="DnaJ_C"/>
    <property type="match status" value="1"/>
</dbReference>
<dbReference type="CDD" id="cd10719">
    <property type="entry name" value="DnaJ_zf"/>
    <property type="match status" value="1"/>
</dbReference>
<dbReference type="FunFam" id="2.10.230.10:FF:000002">
    <property type="entry name" value="Molecular chaperone DnaJ"/>
    <property type="match status" value="1"/>
</dbReference>
<dbReference type="FunFam" id="2.60.260.20:FF:000004">
    <property type="entry name" value="Molecular chaperone DnaJ"/>
    <property type="match status" value="1"/>
</dbReference>
<dbReference type="Gene3D" id="1.10.287.110">
    <property type="entry name" value="DnaJ domain"/>
    <property type="match status" value="1"/>
</dbReference>
<dbReference type="Gene3D" id="2.10.230.10">
    <property type="entry name" value="Heat shock protein DnaJ, cysteine-rich domain"/>
    <property type="match status" value="1"/>
</dbReference>
<dbReference type="Gene3D" id="2.60.260.20">
    <property type="entry name" value="Urease metallochaperone UreE, N-terminal domain"/>
    <property type="match status" value="2"/>
</dbReference>
<dbReference type="HAMAP" id="MF_01152">
    <property type="entry name" value="DnaJ"/>
    <property type="match status" value="1"/>
</dbReference>
<dbReference type="InterPro" id="IPR012724">
    <property type="entry name" value="DnaJ"/>
</dbReference>
<dbReference type="InterPro" id="IPR002939">
    <property type="entry name" value="DnaJ_C"/>
</dbReference>
<dbReference type="InterPro" id="IPR001623">
    <property type="entry name" value="DnaJ_domain"/>
</dbReference>
<dbReference type="InterPro" id="IPR018253">
    <property type="entry name" value="DnaJ_domain_CS"/>
</dbReference>
<dbReference type="InterPro" id="IPR008971">
    <property type="entry name" value="HSP40/DnaJ_pept-bd"/>
</dbReference>
<dbReference type="InterPro" id="IPR001305">
    <property type="entry name" value="HSP_DnaJ_Cys-rich_dom"/>
</dbReference>
<dbReference type="InterPro" id="IPR036410">
    <property type="entry name" value="HSP_DnaJ_Cys-rich_dom_sf"/>
</dbReference>
<dbReference type="InterPro" id="IPR036869">
    <property type="entry name" value="J_dom_sf"/>
</dbReference>
<dbReference type="NCBIfam" id="TIGR02349">
    <property type="entry name" value="DnaJ_bact"/>
    <property type="match status" value="1"/>
</dbReference>
<dbReference type="NCBIfam" id="NF008035">
    <property type="entry name" value="PRK10767.1"/>
    <property type="match status" value="1"/>
</dbReference>
<dbReference type="PANTHER" id="PTHR43096:SF48">
    <property type="entry name" value="CHAPERONE PROTEIN DNAJ"/>
    <property type="match status" value="1"/>
</dbReference>
<dbReference type="PANTHER" id="PTHR43096">
    <property type="entry name" value="DNAJ HOMOLOG 1, MITOCHONDRIAL-RELATED"/>
    <property type="match status" value="1"/>
</dbReference>
<dbReference type="Pfam" id="PF00226">
    <property type="entry name" value="DnaJ"/>
    <property type="match status" value="1"/>
</dbReference>
<dbReference type="Pfam" id="PF01556">
    <property type="entry name" value="DnaJ_C"/>
    <property type="match status" value="1"/>
</dbReference>
<dbReference type="Pfam" id="PF00684">
    <property type="entry name" value="DnaJ_CXXCXGXG"/>
    <property type="match status" value="1"/>
</dbReference>
<dbReference type="PRINTS" id="PR00625">
    <property type="entry name" value="JDOMAIN"/>
</dbReference>
<dbReference type="SMART" id="SM00271">
    <property type="entry name" value="DnaJ"/>
    <property type="match status" value="1"/>
</dbReference>
<dbReference type="SUPFAM" id="SSF46565">
    <property type="entry name" value="Chaperone J-domain"/>
    <property type="match status" value="1"/>
</dbReference>
<dbReference type="SUPFAM" id="SSF57938">
    <property type="entry name" value="DnaJ/Hsp40 cysteine-rich domain"/>
    <property type="match status" value="1"/>
</dbReference>
<dbReference type="SUPFAM" id="SSF49493">
    <property type="entry name" value="HSP40/DnaJ peptide-binding domain"/>
    <property type="match status" value="2"/>
</dbReference>
<dbReference type="PROSITE" id="PS00636">
    <property type="entry name" value="DNAJ_1"/>
    <property type="match status" value="1"/>
</dbReference>
<dbReference type="PROSITE" id="PS50076">
    <property type="entry name" value="DNAJ_2"/>
    <property type="match status" value="1"/>
</dbReference>
<dbReference type="PROSITE" id="PS51188">
    <property type="entry name" value="ZF_CR"/>
    <property type="match status" value="1"/>
</dbReference>
<accession>B2IBR5</accession>
<feature type="chain" id="PRO_1000164242" description="Chaperone protein DnaJ">
    <location>
        <begin position="1"/>
        <end position="372"/>
    </location>
</feature>
<feature type="domain" description="J" evidence="1">
    <location>
        <begin position="5"/>
        <end position="70"/>
    </location>
</feature>
<feature type="repeat" description="CXXCXGXG motif">
    <location>
        <begin position="142"/>
        <end position="149"/>
    </location>
</feature>
<feature type="repeat" description="CXXCXGXG motif">
    <location>
        <begin position="159"/>
        <end position="166"/>
    </location>
</feature>
<feature type="repeat" description="CXXCXGXG motif">
    <location>
        <begin position="181"/>
        <end position="188"/>
    </location>
</feature>
<feature type="repeat" description="CXXCXGXG motif">
    <location>
        <begin position="195"/>
        <end position="202"/>
    </location>
</feature>
<feature type="zinc finger region" description="CR-type" evidence="1">
    <location>
        <begin position="129"/>
        <end position="207"/>
    </location>
</feature>
<feature type="binding site" evidence="1">
    <location>
        <position position="142"/>
    </location>
    <ligand>
        <name>Zn(2+)</name>
        <dbReference type="ChEBI" id="CHEBI:29105"/>
        <label>1</label>
    </ligand>
</feature>
<feature type="binding site" evidence="1">
    <location>
        <position position="145"/>
    </location>
    <ligand>
        <name>Zn(2+)</name>
        <dbReference type="ChEBI" id="CHEBI:29105"/>
        <label>1</label>
    </ligand>
</feature>
<feature type="binding site" evidence="1">
    <location>
        <position position="159"/>
    </location>
    <ligand>
        <name>Zn(2+)</name>
        <dbReference type="ChEBI" id="CHEBI:29105"/>
        <label>2</label>
    </ligand>
</feature>
<feature type="binding site" evidence="1">
    <location>
        <position position="162"/>
    </location>
    <ligand>
        <name>Zn(2+)</name>
        <dbReference type="ChEBI" id="CHEBI:29105"/>
        <label>2</label>
    </ligand>
</feature>
<feature type="binding site" evidence="1">
    <location>
        <position position="181"/>
    </location>
    <ligand>
        <name>Zn(2+)</name>
        <dbReference type="ChEBI" id="CHEBI:29105"/>
        <label>2</label>
    </ligand>
</feature>
<feature type="binding site" evidence="1">
    <location>
        <position position="184"/>
    </location>
    <ligand>
        <name>Zn(2+)</name>
        <dbReference type="ChEBI" id="CHEBI:29105"/>
        <label>2</label>
    </ligand>
</feature>
<feature type="binding site" evidence="1">
    <location>
        <position position="195"/>
    </location>
    <ligand>
        <name>Zn(2+)</name>
        <dbReference type="ChEBI" id="CHEBI:29105"/>
        <label>1</label>
    </ligand>
</feature>
<feature type="binding site" evidence="1">
    <location>
        <position position="198"/>
    </location>
    <ligand>
        <name>Zn(2+)</name>
        <dbReference type="ChEBI" id="CHEBI:29105"/>
        <label>1</label>
    </ligand>
</feature>
<evidence type="ECO:0000255" key="1">
    <source>
        <dbReference type="HAMAP-Rule" id="MF_01152"/>
    </source>
</evidence>
<name>DNAJ_BEII9</name>
<reference key="1">
    <citation type="journal article" date="2010" name="J. Bacteriol.">
        <title>Complete genome sequence of Beijerinckia indica subsp. indica.</title>
        <authorList>
            <person name="Tamas I."/>
            <person name="Dedysh S.N."/>
            <person name="Liesack W."/>
            <person name="Stott M.B."/>
            <person name="Alam M."/>
            <person name="Murrell J.C."/>
            <person name="Dunfield P.F."/>
        </authorList>
    </citation>
    <scope>NUCLEOTIDE SEQUENCE [LARGE SCALE GENOMIC DNA]</scope>
    <source>
        <strain>ATCC 9039 / DSM 1715 / NCIMB 8712</strain>
    </source>
</reference>
<keyword id="KW-0143">Chaperone</keyword>
<keyword id="KW-0963">Cytoplasm</keyword>
<keyword id="KW-0235">DNA replication</keyword>
<keyword id="KW-0479">Metal-binding</keyword>
<keyword id="KW-1185">Reference proteome</keyword>
<keyword id="KW-0677">Repeat</keyword>
<keyword id="KW-0346">Stress response</keyword>
<keyword id="KW-0862">Zinc</keyword>
<keyword id="KW-0863">Zinc-finger</keyword>